<dbReference type="EC" id="1.2.1.27" evidence="3"/>
<dbReference type="EMBL" id="CH379064">
    <property type="protein sequence ID" value="EAL31846.1"/>
    <property type="status" value="ALT_SEQ"/>
    <property type="molecule type" value="Genomic_DNA"/>
</dbReference>
<dbReference type="SMR" id="Q29HB2"/>
<dbReference type="FunCoup" id="Q29HB2">
    <property type="interactions" value="1297"/>
</dbReference>
<dbReference type="STRING" id="46245.Q29HB2"/>
<dbReference type="EnsemblMetazoa" id="FBtr0284054">
    <property type="protein sequence ID" value="FBpp0282492"/>
    <property type="gene ID" value="FBgn0074739"/>
</dbReference>
<dbReference type="KEGG" id="dpo:4815188"/>
<dbReference type="eggNOG" id="KOG2449">
    <property type="taxonomic scope" value="Eukaryota"/>
</dbReference>
<dbReference type="HOGENOM" id="CLU_005391_1_10_1"/>
<dbReference type="InParanoid" id="Q29HB2"/>
<dbReference type="OMA" id="GGAKNHI"/>
<dbReference type="PhylomeDB" id="Q29HB2"/>
<dbReference type="Proteomes" id="UP000001819">
    <property type="component" value="Chromosome X"/>
</dbReference>
<dbReference type="Bgee" id="FBgn0074739">
    <property type="expression patterns" value="Expressed in female reproductive system and 3 other cell types or tissues"/>
</dbReference>
<dbReference type="GO" id="GO:0005739">
    <property type="term" value="C:mitochondrion"/>
    <property type="evidence" value="ECO:0007669"/>
    <property type="project" value="UniProtKB-SubCell"/>
</dbReference>
<dbReference type="GO" id="GO:0018478">
    <property type="term" value="F:malonate-semialdehyde dehydrogenase (acetylating) activity"/>
    <property type="evidence" value="ECO:0007669"/>
    <property type="project" value="UniProtKB-EC"/>
</dbReference>
<dbReference type="GO" id="GO:0004491">
    <property type="term" value="F:methylmalonate-semialdehyde dehydrogenase (acylating, NAD) activity"/>
    <property type="evidence" value="ECO:0000250"/>
    <property type="project" value="UniProtKB"/>
</dbReference>
<dbReference type="GO" id="GO:0006210">
    <property type="term" value="P:thymine catabolic process"/>
    <property type="evidence" value="ECO:0007669"/>
    <property type="project" value="TreeGrafter"/>
</dbReference>
<dbReference type="GO" id="GO:0019859">
    <property type="term" value="P:thymine metabolic process"/>
    <property type="evidence" value="ECO:0000250"/>
    <property type="project" value="UniProtKB"/>
</dbReference>
<dbReference type="GO" id="GO:0006574">
    <property type="term" value="P:valine catabolic process"/>
    <property type="evidence" value="ECO:0007669"/>
    <property type="project" value="TreeGrafter"/>
</dbReference>
<dbReference type="GO" id="GO:0006573">
    <property type="term" value="P:valine metabolic process"/>
    <property type="evidence" value="ECO:0000250"/>
    <property type="project" value="UniProtKB"/>
</dbReference>
<dbReference type="CDD" id="cd07085">
    <property type="entry name" value="ALDH_F6_MMSDH"/>
    <property type="match status" value="1"/>
</dbReference>
<dbReference type="FunFam" id="3.40.309.10:FF:000002">
    <property type="entry name" value="Methylmalonate-semialdehyde dehydrogenase (Acylating)"/>
    <property type="match status" value="1"/>
</dbReference>
<dbReference type="FunFam" id="3.40.605.10:FF:000003">
    <property type="entry name" value="Methylmalonate-semialdehyde dehydrogenase [acylating]"/>
    <property type="match status" value="1"/>
</dbReference>
<dbReference type="Gene3D" id="3.40.605.10">
    <property type="entry name" value="Aldehyde Dehydrogenase, Chain A, domain 1"/>
    <property type="match status" value="1"/>
</dbReference>
<dbReference type="Gene3D" id="3.40.309.10">
    <property type="entry name" value="Aldehyde Dehydrogenase, Chain A, domain 2"/>
    <property type="match status" value="1"/>
</dbReference>
<dbReference type="InterPro" id="IPR016161">
    <property type="entry name" value="Ald_DH/histidinol_DH"/>
</dbReference>
<dbReference type="InterPro" id="IPR016163">
    <property type="entry name" value="Ald_DH_C"/>
</dbReference>
<dbReference type="InterPro" id="IPR016160">
    <property type="entry name" value="Ald_DH_CS_CYS"/>
</dbReference>
<dbReference type="InterPro" id="IPR016162">
    <property type="entry name" value="Ald_DH_N"/>
</dbReference>
<dbReference type="InterPro" id="IPR015590">
    <property type="entry name" value="Aldehyde_DH_dom"/>
</dbReference>
<dbReference type="InterPro" id="IPR010061">
    <property type="entry name" value="MeMal-semiAld_DH"/>
</dbReference>
<dbReference type="NCBIfam" id="TIGR01722">
    <property type="entry name" value="MMSDH"/>
    <property type="match status" value="1"/>
</dbReference>
<dbReference type="PANTHER" id="PTHR43866">
    <property type="entry name" value="MALONATE-SEMIALDEHYDE DEHYDROGENASE"/>
    <property type="match status" value="1"/>
</dbReference>
<dbReference type="PANTHER" id="PTHR43866:SF3">
    <property type="entry name" value="METHYLMALONATE-SEMIALDEHYDE DEHYDROGENASE [ACYLATING], MITOCHONDRIAL"/>
    <property type="match status" value="1"/>
</dbReference>
<dbReference type="Pfam" id="PF00171">
    <property type="entry name" value="Aldedh"/>
    <property type="match status" value="1"/>
</dbReference>
<dbReference type="SUPFAM" id="SSF53720">
    <property type="entry name" value="ALDH-like"/>
    <property type="match status" value="1"/>
</dbReference>
<dbReference type="PROSITE" id="PS00070">
    <property type="entry name" value="ALDEHYDE_DEHYDR_CYS"/>
    <property type="match status" value="1"/>
</dbReference>
<feature type="transit peptide" description="Mitochondrion" evidence="4">
    <location>
        <begin position="1"/>
        <end status="unknown"/>
    </location>
</feature>
<feature type="chain" id="PRO_0000312824" description="Probable methylmalonate-semialdehyde/malonate-semialdehyde dehydrogenase [acylating], mitochondrial">
    <location>
        <begin status="unknown"/>
        <end position="520"/>
    </location>
</feature>
<feature type="active site" description="Nucleophile" evidence="2 5">
    <location>
        <position position="303"/>
    </location>
</feature>
<feature type="binding site" evidence="1">
    <location>
        <position position="169"/>
    </location>
    <ligand>
        <name>NAD(+)</name>
        <dbReference type="ChEBI" id="CHEBI:57540"/>
    </ligand>
</feature>
<feature type="binding site" evidence="1">
    <location>
        <position position="171"/>
    </location>
    <ligand>
        <name>NAD(+)</name>
        <dbReference type="ChEBI" id="CHEBI:57540"/>
    </ligand>
</feature>
<feature type="binding site" evidence="1">
    <location>
        <position position="195"/>
    </location>
    <ligand>
        <name>NAD(+)</name>
        <dbReference type="ChEBI" id="CHEBI:57540"/>
    </ligand>
</feature>
<feature type="binding site" evidence="1">
    <location>
        <position position="198"/>
    </location>
    <ligand>
        <name>NAD(+)</name>
        <dbReference type="ChEBI" id="CHEBI:57540"/>
    </ligand>
</feature>
<feature type="binding site" evidence="1">
    <location>
        <position position="199"/>
    </location>
    <ligand>
        <name>NAD(+)</name>
        <dbReference type="ChEBI" id="CHEBI:57540"/>
    </ligand>
</feature>
<feature type="binding site" evidence="1">
    <location>
        <position position="248"/>
    </location>
    <ligand>
        <name>NAD(+)</name>
        <dbReference type="ChEBI" id="CHEBI:57540"/>
    </ligand>
</feature>
<feature type="binding site" evidence="1">
    <location>
        <position position="403"/>
    </location>
    <ligand>
        <name>NAD(+)</name>
        <dbReference type="ChEBI" id="CHEBI:57540"/>
    </ligand>
</feature>
<evidence type="ECO:0000250" key="1">
    <source>
        <dbReference type="UniProtKB" id="P42412"/>
    </source>
</evidence>
<evidence type="ECO:0000250" key="2">
    <source>
        <dbReference type="UniProtKB" id="Q02252"/>
    </source>
</evidence>
<evidence type="ECO:0000250" key="3">
    <source>
        <dbReference type="UniProtKB" id="Q02253"/>
    </source>
</evidence>
<evidence type="ECO:0000255" key="4"/>
<evidence type="ECO:0000255" key="5">
    <source>
        <dbReference type="PROSITE-ProRule" id="PRU10008"/>
    </source>
</evidence>
<evidence type="ECO:0000305" key="6"/>
<evidence type="ECO:0000312" key="7">
    <source>
        <dbReference type="EMBL" id="EAL31846.1"/>
    </source>
</evidence>
<name>MMSA_DROPS</name>
<keyword id="KW-0496">Mitochondrion</keyword>
<keyword id="KW-0520">NAD</keyword>
<keyword id="KW-0560">Oxidoreductase</keyword>
<keyword id="KW-1185">Reference proteome</keyword>
<keyword id="KW-0809">Transit peptide</keyword>
<gene>
    <name type="ORF">GA14712</name>
</gene>
<proteinExistence type="inferred from homology"/>
<protein>
    <recommendedName>
        <fullName evidence="3">Probable methylmalonate-semialdehyde/malonate-semialdehyde dehydrogenase [acylating], mitochondrial</fullName>
        <shortName evidence="3">MMSDH</shortName>
        <ecNumber evidence="3">1.2.1.27</ecNumber>
    </recommendedName>
    <alternativeName>
        <fullName evidence="3">Malonate-semialdehyde dehydrogenase [acylating]</fullName>
    </alternativeName>
</protein>
<reference evidence="7" key="1">
    <citation type="journal article" date="2005" name="Genome Res.">
        <title>Comparative genome sequencing of Drosophila pseudoobscura: chromosomal, gene, and cis-element evolution.</title>
        <authorList>
            <person name="Richards S."/>
            <person name="Liu Y."/>
            <person name="Bettencourt B.R."/>
            <person name="Hradecky P."/>
            <person name="Letovsky S."/>
            <person name="Nielsen R."/>
            <person name="Thornton K."/>
            <person name="Hubisz M.J."/>
            <person name="Chen R."/>
            <person name="Meisel R.P."/>
            <person name="Couronne O."/>
            <person name="Hua S."/>
            <person name="Smith M.A."/>
            <person name="Zhang P."/>
            <person name="Liu J."/>
            <person name="Bussemaker H.J."/>
            <person name="van Batenburg M.F."/>
            <person name="Howells S.L."/>
            <person name="Scherer S.E."/>
            <person name="Sodergren E."/>
            <person name="Matthews B.B."/>
            <person name="Crosby M.A."/>
            <person name="Schroeder A.J."/>
            <person name="Ortiz-Barrientos D."/>
            <person name="Rives C.M."/>
            <person name="Metzker M.L."/>
            <person name="Muzny D.M."/>
            <person name="Scott G."/>
            <person name="Steffen D."/>
            <person name="Wheeler D.A."/>
            <person name="Worley K.C."/>
            <person name="Havlak P."/>
            <person name="Durbin K.J."/>
            <person name="Egan A."/>
            <person name="Gill R."/>
            <person name="Hume J."/>
            <person name="Morgan M.B."/>
            <person name="Miner G."/>
            <person name="Hamilton C."/>
            <person name="Huang Y."/>
            <person name="Waldron L."/>
            <person name="Verduzco D."/>
            <person name="Clerc-Blankenburg K.P."/>
            <person name="Dubchak I."/>
            <person name="Noor M.A.F."/>
            <person name="Anderson W."/>
            <person name="White K.P."/>
            <person name="Clark A.G."/>
            <person name="Schaeffer S.W."/>
            <person name="Gelbart W.M."/>
            <person name="Weinstock G.M."/>
            <person name="Gibbs R.A."/>
        </authorList>
    </citation>
    <scope>NUCLEOTIDE SEQUENCE [LARGE SCALE GENOMIC DNA]</scope>
    <source>
        <strain>MV2-25 / Tucson 14011-0121.94</strain>
    </source>
</reference>
<sequence>MAFLRAIGAEARYLTQRAYSSAAPTTKLFIDGKFVESKTKEWIDVHDPATNKVVTRVPKATQDEMQTALESNKKAFRSWSNQSILTRQAVMFKLQALIKENMGELAKNITKEQGKTLADAEGDVLRGLQVVEHCCSIPSLQMGETVANVARDMDTYSLVMPLGVTAGIAPFNFPAMIPLWMFPVAITTGNTMLLKPSERVPGATMLLMELLNEAGCPPGVVNVIHGQHDAVNFICDAPAIKAVSFVGSDQAGKYIYERAGKNGKRVQSNMGAKNHGVILSDANKENTLNQLAGAAFGAAGQRCMALSTAVFVGDAQGWIPDLVERAQKLKVNAGHVPGTDVGPVISAASRQRINDLIESGVKEGAKLILDGRKISVPGFEDGYFVGPTILSDVTPSMKCYTEEIFGPVLVILKADNLDDAIDIVNANPYGNGTAVFTTNGAAARKFVNEIDAGQVGVNVPIPVPLPMFSFTGTRGSFRGDHHFYGKQGIKFYTQTKTVTQLWRETDVNHTQAAVAMPTMK</sequence>
<comment type="function">
    <text evidence="3">Probable malonate and methylmalonate semialdehyde dehydrogenase involved in the catabolism of valine, thymine, and compounds catabolized by way of beta-alanine, including uracil and cytidine.</text>
</comment>
<comment type="catalytic activity">
    <reaction evidence="3">
        <text>2-methyl-3-oxopropanoate + NAD(+) + CoA + H2O = propanoyl-CoA + hydrogencarbonate + NADH + H(+)</text>
        <dbReference type="Rhea" id="RHEA:20804"/>
        <dbReference type="ChEBI" id="CHEBI:15377"/>
        <dbReference type="ChEBI" id="CHEBI:15378"/>
        <dbReference type="ChEBI" id="CHEBI:17544"/>
        <dbReference type="ChEBI" id="CHEBI:57287"/>
        <dbReference type="ChEBI" id="CHEBI:57392"/>
        <dbReference type="ChEBI" id="CHEBI:57540"/>
        <dbReference type="ChEBI" id="CHEBI:57700"/>
        <dbReference type="ChEBI" id="CHEBI:57945"/>
        <dbReference type="EC" id="1.2.1.27"/>
    </reaction>
    <physiologicalReaction direction="left-to-right" evidence="3">
        <dbReference type="Rhea" id="RHEA:20805"/>
    </physiologicalReaction>
</comment>
<comment type="catalytic activity">
    <reaction evidence="3">
        <text>3-oxopropanoate + NAD(+) + CoA + H2O = hydrogencarbonate + acetyl-CoA + NADH + H(+)</text>
        <dbReference type="Rhea" id="RHEA:76615"/>
        <dbReference type="ChEBI" id="CHEBI:15377"/>
        <dbReference type="ChEBI" id="CHEBI:15378"/>
        <dbReference type="ChEBI" id="CHEBI:17544"/>
        <dbReference type="ChEBI" id="CHEBI:33190"/>
        <dbReference type="ChEBI" id="CHEBI:57287"/>
        <dbReference type="ChEBI" id="CHEBI:57288"/>
        <dbReference type="ChEBI" id="CHEBI:57540"/>
        <dbReference type="ChEBI" id="CHEBI:57945"/>
        <dbReference type="EC" id="1.2.1.27"/>
    </reaction>
    <physiologicalReaction direction="left-to-right" evidence="3">
        <dbReference type="Rhea" id="RHEA:76616"/>
    </physiologicalReaction>
</comment>
<comment type="subunit">
    <text evidence="3">Homotetramer.</text>
</comment>
<comment type="subcellular location">
    <subcellularLocation>
        <location evidence="3">Mitochondrion</location>
    </subcellularLocation>
</comment>
<comment type="similarity">
    <text evidence="4">Belongs to the aldehyde dehydrogenase family.</text>
</comment>
<comment type="sequence caution" evidence="6">
    <conflict type="erroneous gene model prediction">
        <sequence resource="EMBL-CDS" id="EAL31846"/>
    </conflict>
</comment>
<organism>
    <name type="scientific">Drosophila pseudoobscura pseudoobscura</name>
    <name type="common">Fruit fly</name>
    <dbReference type="NCBI Taxonomy" id="46245"/>
    <lineage>
        <taxon>Eukaryota</taxon>
        <taxon>Metazoa</taxon>
        <taxon>Ecdysozoa</taxon>
        <taxon>Arthropoda</taxon>
        <taxon>Hexapoda</taxon>
        <taxon>Insecta</taxon>
        <taxon>Pterygota</taxon>
        <taxon>Neoptera</taxon>
        <taxon>Endopterygota</taxon>
        <taxon>Diptera</taxon>
        <taxon>Brachycera</taxon>
        <taxon>Muscomorpha</taxon>
        <taxon>Ephydroidea</taxon>
        <taxon>Drosophilidae</taxon>
        <taxon>Drosophila</taxon>
        <taxon>Sophophora</taxon>
    </lineage>
</organism>
<accession>Q29HB2</accession>